<dbReference type="EC" id="1.1.1.27" evidence="1"/>
<dbReference type="EMBL" id="AL591974">
    <property type="protein sequence ID" value="CAD00737.1"/>
    <property type="molecule type" value="Genomic_DNA"/>
</dbReference>
<dbReference type="EMBL" id="M82881">
    <property type="protein sequence ID" value="AAA25274.1"/>
    <property type="molecule type" value="Genomic_DNA"/>
</dbReference>
<dbReference type="PIR" id="AC1101">
    <property type="entry name" value="AC1101"/>
</dbReference>
<dbReference type="PIR" id="G43868">
    <property type="entry name" value="G43868"/>
</dbReference>
<dbReference type="RefSeq" id="NP_463741.1">
    <property type="nucleotide sequence ID" value="NC_003210.1"/>
</dbReference>
<dbReference type="RefSeq" id="WP_003722739.1">
    <property type="nucleotide sequence ID" value="NZ_CP149495.1"/>
</dbReference>
<dbReference type="SMR" id="P33380"/>
<dbReference type="STRING" id="169963.gene:17592846"/>
<dbReference type="PaxDb" id="169963-lmo0210"/>
<dbReference type="EnsemblBacteria" id="CAD00737">
    <property type="protein sequence ID" value="CAD00737"/>
    <property type="gene ID" value="CAD00737"/>
</dbReference>
<dbReference type="GeneID" id="987043"/>
<dbReference type="KEGG" id="lmo:lmo0210"/>
<dbReference type="PATRIC" id="fig|169963.11.peg.215"/>
<dbReference type="eggNOG" id="COG0039">
    <property type="taxonomic scope" value="Bacteria"/>
</dbReference>
<dbReference type="HOGENOM" id="CLU_045401_1_1_9"/>
<dbReference type="OrthoDB" id="9802969at2"/>
<dbReference type="PhylomeDB" id="P33380"/>
<dbReference type="BioCyc" id="LMON169963:LMO0210-MONOMER"/>
<dbReference type="UniPathway" id="UPA00554">
    <property type="reaction ID" value="UER00611"/>
</dbReference>
<dbReference type="Proteomes" id="UP000000817">
    <property type="component" value="Chromosome"/>
</dbReference>
<dbReference type="GO" id="GO:0005737">
    <property type="term" value="C:cytoplasm"/>
    <property type="evidence" value="ECO:0007669"/>
    <property type="project" value="UniProtKB-SubCell"/>
</dbReference>
<dbReference type="GO" id="GO:0004459">
    <property type="term" value="F:L-lactate dehydrogenase activity"/>
    <property type="evidence" value="ECO:0000318"/>
    <property type="project" value="GO_Central"/>
</dbReference>
<dbReference type="GO" id="GO:0006096">
    <property type="term" value="P:glycolytic process"/>
    <property type="evidence" value="ECO:0007669"/>
    <property type="project" value="UniProtKB-UniRule"/>
</dbReference>
<dbReference type="GO" id="GO:0006089">
    <property type="term" value="P:lactate metabolic process"/>
    <property type="evidence" value="ECO:0000318"/>
    <property type="project" value="GO_Central"/>
</dbReference>
<dbReference type="GO" id="GO:0006090">
    <property type="term" value="P:pyruvate metabolic process"/>
    <property type="evidence" value="ECO:0000318"/>
    <property type="project" value="GO_Central"/>
</dbReference>
<dbReference type="CDD" id="cd05291">
    <property type="entry name" value="HicDH_like"/>
    <property type="match status" value="1"/>
</dbReference>
<dbReference type="FunFam" id="3.40.50.720:FF:000018">
    <property type="entry name" value="Malate dehydrogenase"/>
    <property type="match status" value="1"/>
</dbReference>
<dbReference type="Gene3D" id="3.90.110.10">
    <property type="entry name" value="Lactate dehydrogenase/glycoside hydrolase, family 4, C-terminal"/>
    <property type="match status" value="1"/>
</dbReference>
<dbReference type="Gene3D" id="3.40.50.720">
    <property type="entry name" value="NAD(P)-binding Rossmann-like Domain"/>
    <property type="match status" value="1"/>
</dbReference>
<dbReference type="HAMAP" id="MF_00488">
    <property type="entry name" value="Lactate_dehydrog"/>
    <property type="match status" value="1"/>
</dbReference>
<dbReference type="InterPro" id="IPR001557">
    <property type="entry name" value="L-lactate/malate_DH"/>
</dbReference>
<dbReference type="InterPro" id="IPR011304">
    <property type="entry name" value="L-lactate_DH"/>
</dbReference>
<dbReference type="InterPro" id="IPR018177">
    <property type="entry name" value="L-lactate_DH_AS"/>
</dbReference>
<dbReference type="InterPro" id="IPR022383">
    <property type="entry name" value="Lactate/malate_DH_C"/>
</dbReference>
<dbReference type="InterPro" id="IPR001236">
    <property type="entry name" value="Lactate/malate_DH_N"/>
</dbReference>
<dbReference type="InterPro" id="IPR015955">
    <property type="entry name" value="Lactate_DH/Glyco_Ohase_4_C"/>
</dbReference>
<dbReference type="InterPro" id="IPR036291">
    <property type="entry name" value="NAD(P)-bd_dom_sf"/>
</dbReference>
<dbReference type="NCBIfam" id="TIGR01771">
    <property type="entry name" value="L-LDH-NAD"/>
    <property type="match status" value="1"/>
</dbReference>
<dbReference type="NCBIfam" id="NF000824">
    <property type="entry name" value="PRK00066.1"/>
    <property type="match status" value="1"/>
</dbReference>
<dbReference type="NCBIfam" id="NF004863">
    <property type="entry name" value="PRK06223.1"/>
    <property type="match status" value="1"/>
</dbReference>
<dbReference type="PANTHER" id="PTHR43128">
    <property type="entry name" value="L-2-HYDROXYCARBOXYLATE DEHYDROGENASE (NAD(P)(+))"/>
    <property type="match status" value="1"/>
</dbReference>
<dbReference type="PANTHER" id="PTHR43128:SF16">
    <property type="entry name" value="L-LACTATE DEHYDROGENASE"/>
    <property type="match status" value="1"/>
</dbReference>
<dbReference type="Pfam" id="PF02866">
    <property type="entry name" value="Ldh_1_C"/>
    <property type="match status" value="1"/>
</dbReference>
<dbReference type="Pfam" id="PF00056">
    <property type="entry name" value="Ldh_1_N"/>
    <property type="match status" value="1"/>
</dbReference>
<dbReference type="PIRSF" id="PIRSF000102">
    <property type="entry name" value="Lac_mal_DH"/>
    <property type="match status" value="1"/>
</dbReference>
<dbReference type="PRINTS" id="PR00086">
    <property type="entry name" value="LLDHDRGNASE"/>
</dbReference>
<dbReference type="SUPFAM" id="SSF56327">
    <property type="entry name" value="LDH C-terminal domain-like"/>
    <property type="match status" value="1"/>
</dbReference>
<dbReference type="SUPFAM" id="SSF51735">
    <property type="entry name" value="NAD(P)-binding Rossmann-fold domains"/>
    <property type="match status" value="1"/>
</dbReference>
<dbReference type="PROSITE" id="PS00064">
    <property type="entry name" value="L_LDH"/>
    <property type="match status" value="1"/>
</dbReference>
<organism>
    <name type="scientific">Listeria monocytogenes serovar 1/2a (strain ATCC BAA-679 / EGD-e)</name>
    <dbReference type="NCBI Taxonomy" id="169963"/>
    <lineage>
        <taxon>Bacteria</taxon>
        <taxon>Bacillati</taxon>
        <taxon>Bacillota</taxon>
        <taxon>Bacilli</taxon>
        <taxon>Bacillales</taxon>
        <taxon>Listeriaceae</taxon>
        <taxon>Listeria</taxon>
    </lineage>
</organism>
<feature type="chain" id="PRO_0000168365" description="L-lactate dehydrogenase 1">
    <location>
        <begin position="1"/>
        <end position="313"/>
    </location>
</feature>
<feature type="active site" description="Proton acceptor" evidence="1">
    <location>
        <position position="176"/>
    </location>
</feature>
<feature type="binding site" evidence="1">
    <location>
        <position position="15"/>
    </location>
    <ligand>
        <name>NAD(+)</name>
        <dbReference type="ChEBI" id="CHEBI:57540"/>
    </ligand>
</feature>
<feature type="binding site" evidence="1">
    <location>
        <position position="36"/>
    </location>
    <ligand>
        <name>NAD(+)</name>
        <dbReference type="ChEBI" id="CHEBI:57540"/>
    </ligand>
</feature>
<feature type="binding site" evidence="1">
    <location>
        <position position="41"/>
    </location>
    <ligand>
        <name>NAD(+)</name>
        <dbReference type="ChEBI" id="CHEBI:57540"/>
    </ligand>
</feature>
<feature type="binding site" evidence="1">
    <location>
        <position position="66"/>
    </location>
    <ligand>
        <name>NAD(+)</name>
        <dbReference type="ChEBI" id="CHEBI:57540"/>
    </ligand>
</feature>
<feature type="binding site" evidence="1">
    <location>
        <position position="83"/>
    </location>
    <ligand>
        <name>substrate</name>
    </ligand>
</feature>
<feature type="binding site" evidence="1">
    <location>
        <position position="89"/>
    </location>
    <ligand>
        <name>substrate</name>
    </ligand>
</feature>
<feature type="binding site" evidence="1">
    <location>
        <begin position="119"/>
        <end position="121"/>
    </location>
    <ligand>
        <name>NAD(+)</name>
        <dbReference type="ChEBI" id="CHEBI:57540"/>
    </ligand>
</feature>
<feature type="binding site" evidence="1">
    <location>
        <begin position="121"/>
        <end position="124"/>
    </location>
    <ligand>
        <name>substrate</name>
    </ligand>
</feature>
<feature type="binding site" evidence="1">
    <location>
        <position position="144"/>
    </location>
    <ligand>
        <name>NAD(+)</name>
        <dbReference type="ChEBI" id="CHEBI:57540"/>
    </ligand>
</feature>
<feature type="binding site" evidence="1">
    <location>
        <begin position="149"/>
        <end position="152"/>
    </location>
    <ligand>
        <name>substrate</name>
    </ligand>
</feature>
<feature type="binding site" evidence="1">
    <location>
        <position position="154"/>
    </location>
    <ligand>
        <name>beta-D-fructose 1,6-bisphosphate</name>
        <dbReference type="ChEBI" id="CHEBI:32966"/>
        <note>allosteric activator</note>
    </ligand>
</feature>
<feature type="binding site" evidence="1">
    <location>
        <position position="169"/>
    </location>
    <ligand>
        <name>beta-D-fructose 1,6-bisphosphate</name>
        <dbReference type="ChEBI" id="CHEBI:32966"/>
        <note>allosteric activator</note>
    </ligand>
</feature>
<feature type="binding site" evidence="1">
    <location>
        <position position="227"/>
    </location>
    <ligand>
        <name>substrate</name>
    </ligand>
</feature>
<feature type="modified residue" description="Phosphotyrosine" evidence="1">
    <location>
        <position position="218"/>
    </location>
</feature>
<sequence>MKDHQKIILVGDGAVGSSYAFACVNLSIGQEFGIIDIDKDRTIGDAMDLSHAVPFSTPKKIYSANYSDCHDADLVVVTAGTAQKPGETRLDLVNRNIKIMKGIVDEVMASGFDGIFLIASNPVDILTYATWKFSGLPKERVIGSGTSLDTARFRMSIADYLKVDARNVHGYILGEHGDTEFPAWSHTTVGGLPITEWISEDEQGAMDTIFVSVRDAAYEIINKKGATFYGVAAALARITKAILNNENAILPLSVYLDGHYGMNDIYIGAPAVVNRQGVRHIVEMNLNDKEKEQMKNSADTLKKVLDDAMKQID</sequence>
<evidence type="ECO:0000255" key="1">
    <source>
        <dbReference type="HAMAP-Rule" id="MF_00488"/>
    </source>
</evidence>
<evidence type="ECO:0000305" key="2"/>
<keyword id="KW-0021">Allosteric enzyme</keyword>
<keyword id="KW-0963">Cytoplasm</keyword>
<keyword id="KW-0520">NAD</keyword>
<keyword id="KW-0560">Oxidoreductase</keyword>
<keyword id="KW-0597">Phosphoprotein</keyword>
<keyword id="KW-1185">Reference proteome</keyword>
<name>LDH1_LISMO</name>
<protein>
    <recommendedName>
        <fullName evidence="1">L-lactate dehydrogenase 1</fullName>
        <shortName evidence="1">L-LDH 1</shortName>
        <ecNumber evidence="1">1.1.1.27</ecNumber>
    </recommendedName>
</protein>
<proteinExistence type="inferred from homology"/>
<accession>P33380</accession>
<gene>
    <name evidence="1" type="primary">ldh1</name>
    <name type="synonym">ldh</name>
    <name type="ordered locus">lmo0210</name>
</gene>
<comment type="function">
    <text evidence="1">Catalyzes the conversion of lactate to pyruvate.</text>
</comment>
<comment type="catalytic activity">
    <reaction evidence="1">
        <text>(S)-lactate + NAD(+) = pyruvate + NADH + H(+)</text>
        <dbReference type="Rhea" id="RHEA:23444"/>
        <dbReference type="ChEBI" id="CHEBI:15361"/>
        <dbReference type="ChEBI" id="CHEBI:15378"/>
        <dbReference type="ChEBI" id="CHEBI:16651"/>
        <dbReference type="ChEBI" id="CHEBI:57540"/>
        <dbReference type="ChEBI" id="CHEBI:57945"/>
        <dbReference type="EC" id="1.1.1.27"/>
    </reaction>
</comment>
<comment type="activity regulation">
    <text evidence="1">Allosterically activated by fructose 1,6-bisphosphate (FBP).</text>
</comment>
<comment type="pathway">
    <text evidence="1">Fermentation; pyruvate fermentation to lactate; (S)-lactate from pyruvate: step 1/1.</text>
</comment>
<comment type="subunit">
    <text evidence="1">Homotetramer.</text>
</comment>
<comment type="subcellular location">
    <subcellularLocation>
        <location evidence="1">Cytoplasm</location>
    </subcellularLocation>
</comment>
<comment type="similarity">
    <text evidence="1 2">Belongs to the LDH/MDH superfamily. LDH family.</text>
</comment>
<reference key="1">
    <citation type="journal article" date="2001" name="Science">
        <title>Comparative genomics of Listeria species.</title>
        <authorList>
            <person name="Glaser P."/>
            <person name="Frangeul L."/>
            <person name="Buchrieser C."/>
            <person name="Rusniok C."/>
            <person name="Amend A."/>
            <person name="Baquero F."/>
            <person name="Berche P."/>
            <person name="Bloecker H."/>
            <person name="Brandt P."/>
            <person name="Chakraborty T."/>
            <person name="Charbit A."/>
            <person name="Chetouani F."/>
            <person name="Couve E."/>
            <person name="de Daruvar A."/>
            <person name="Dehoux P."/>
            <person name="Domann E."/>
            <person name="Dominguez-Bernal G."/>
            <person name="Duchaud E."/>
            <person name="Durant L."/>
            <person name="Dussurget O."/>
            <person name="Entian K.-D."/>
            <person name="Fsihi H."/>
            <person name="Garcia-del Portillo F."/>
            <person name="Garrido P."/>
            <person name="Gautier L."/>
            <person name="Goebel W."/>
            <person name="Gomez-Lopez N."/>
            <person name="Hain T."/>
            <person name="Hauf J."/>
            <person name="Jackson D."/>
            <person name="Jones L.-M."/>
            <person name="Kaerst U."/>
            <person name="Kreft J."/>
            <person name="Kuhn M."/>
            <person name="Kunst F."/>
            <person name="Kurapkat G."/>
            <person name="Madueno E."/>
            <person name="Maitournam A."/>
            <person name="Mata Vicente J."/>
            <person name="Ng E."/>
            <person name="Nedjari H."/>
            <person name="Nordsiek G."/>
            <person name="Novella S."/>
            <person name="de Pablos B."/>
            <person name="Perez-Diaz J.-C."/>
            <person name="Purcell R."/>
            <person name="Remmel B."/>
            <person name="Rose M."/>
            <person name="Schlueter T."/>
            <person name="Simoes N."/>
            <person name="Tierrez A."/>
            <person name="Vazquez-Boland J.-A."/>
            <person name="Voss H."/>
            <person name="Wehland J."/>
            <person name="Cossart P."/>
        </authorList>
    </citation>
    <scope>NUCLEOTIDE SEQUENCE [LARGE SCALE GENOMIC DNA]</scope>
    <source>
        <strain>ATCC BAA-679 / EGD-e</strain>
    </source>
</reference>
<reference key="2">
    <citation type="journal article" date="1992" name="Infect. Immun.">
        <title>Nucleotide sequence of the lecithinase operon of Listeria monocytogenes and possible role of lecithinase in cell-to-cell spread.</title>
        <authorList>
            <person name="Vazquez-Boland J.-A."/>
            <person name="Kocks C."/>
            <person name="Dramsi S."/>
            <person name="Ohayon H."/>
            <person name="Geoffroy C."/>
            <person name="Mengaud J."/>
            <person name="Cossart P."/>
        </authorList>
    </citation>
    <scope>NUCLEOTIDE SEQUENCE [GENOMIC DNA] OF 180-313</scope>
    <source>
        <strain>LO28 / Serovar 1/2c</strain>
    </source>
</reference>